<name>SYT_BIFA0</name>
<organism>
    <name type="scientific">Bifidobacterium animalis subsp. lactis (strain AD011)</name>
    <dbReference type="NCBI Taxonomy" id="442563"/>
    <lineage>
        <taxon>Bacteria</taxon>
        <taxon>Bacillati</taxon>
        <taxon>Actinomycetota</taxon>
        <taxon>Actinomycetes</taxon>
        <taxon>Bifidobacteriales</taxon>
        <taxon>Bifidobacteriaceae</taxon>
        <taxon>Bifidobacterium</taxon>
    </lineage>
</organism>
<proteinExistence type="inferred from homology"/>
<reference key="1">
    <citation type="journal article" date="2009" name="J. Bacteriol.">
        <title>Genome sequence of the probiotic bacterium Bifidobacterium animalis subsp. lactis AD011.</title>
        <authorList>
            <person name="Kim J.F."/>
            <person name="Jeong H."/>
            <person name="Yu D.S."/>
            <person name="Choi S.-H."/>
            <person name="Hur C.-G."/>
            <person name="Park M.-S."/>
            <person name="Yoon S.H."/>
            <person name="Kim D.-W."/>
            <person name="Ji G.E."/>
            <person name="Park H.-S."/>
            <person name="Oh T.K."/>
        </authorList>
    </citation>
    <scope>NUCLEOTIDE SEQUENCE [LARGE SCALE GENOMIC DNA]</scope>
    <source>
        <strain>AD011</strain>
    </source>
</reference>
<dbReference type="EC" id="6.1.1.3" evidence="1"/>
<dbReference type="EMBL" id="CP001213">
    <property type="protein sequence ID" value="ACL29633.1"/>
    <property type="molecule type" value="Genomic_DNA"/>
</dbReference>
<dbReference type="RefSeq" id="WP_004217949.1">
    <property type="nucleotide sequence ID" value="NC_011835.1"/>
</dbReference>
<dbReference type="SMR" id="B8DUF4"/>
<dbReference type="STRING" id="442563.BLA_1348"/>
<dbReference type="GeneID" id="29695296"/>
<dbReference type="KEGG" id="bla:BLA_1348"/>
<dbReference type="HOGENOM" id="CLU_008554_0_1_11"/>
<dbReference type="Proteomes" id="UP000002456">
    <property type="component" value="Chromosome"/>
</dbReference>
<dbReference type="GO" id="GO:0005737">
    <property type="term" value="C:cytoplasm"/>
    <property type="evidence" value="ECO:0007669"/>
    <property type="project" value="UniProtKB-SubCell"/>
</dbReference>
<dbReference type="GO" id="GO:0005524">
    <property type="term" value="F:ATP binding"/>
    <property type="evidence" value="ECO:0007669"/>
    <property type="project" value="UniProtKB-UniRule"/>
</dbReference>
<dbReference type="GO" id="GO:0046872">
    <property type="term" value="F:metal ion binding"/>
    <property type="evidence" value="ECO:0007669"/>
    <property type="project" value="UniProtKB-KW"/>
</dbReference>
<dbReference type="GO" id="GO:0004829">
    <property type="term" value="F:threonine-tRNA ligase activity"/>
    <property type="evidence" value="ECO:0007669"/>
    <property type="project" value="UniProtKB-UniRule"/>
</dbReference>
<dbReference type="GO" id="GO:0000049">
    <property type="term" value="F:tRNA binding"/>
    <property type="evidence" value="ECO:0007669"/>
    <property type="project" value="UniProtKB-KW"/>
</dbReference>
<dbReference type="GO" id="GO:0006435">
    <property type="term" value="P:threonyl-tRNA aminoacylation"/>
    <property type="evidence" value="ECO:0007669"/>
    <property type="project" value="UniProtKB-UniRule"/>
</dbReference>
<dbReference type="CDD" id="cd01667">
    <property type="entry name" value="TGS_ThrRS"/>
    <property type="match status" value="1"/>
</dbReference>
<dbReference type="CDD" id="cd00860">
    <property type="entry name" value="ThrRS_anticodon"/>
    <property type="match status" value="1"/>
</dbReference>
<dbReference type="CDD" id="cd00771">
    <property type="entry name" value="ThrRS_core"/>
    <property type="match status" value="1"/>
</dbReference>
<dbReference type="FunFam" id="3.30.930.10:FF:000019">
    <property type="entry name" value="Threonine--tRNA ligase"/>
    <property type="match status" value="1"/>
</dbReference>
<dbReference type="FunFam" id="3.30.980.10:FF:000005">
    <property type="entry name" value="Threonyl-tRNA synthetase, mitochondrial"/>
    <property type="match status" value="1"/>
</dbReference>
<dbReference type="Gene3D" id="3.30.54.20">
    <property type="match status" value="1"/>
</dbReference>
<dbReference type="Gene3D" id="3.40.50.800">
    <property type="entry name" value="Anticodon-binding domain"/>
    <property type="match status" value="1"/>
</dbReference>
<dbReference type="Gene3D" id="3.30.930.10">
    <property type="entry name" value="Bira Bifunctional Protein, Domain 2"/>
    <property type="match status" value="1"/>
</dbReference>
<dbReference type="Gene3D" id="3.30.980.10">
    <property type="entry name" value="Threonyl-trna Synthetase, Chain A, domain 2"/>
    <property type="match status" value="1"/>
</dbReference>
<dbReference type="HAMAP" id="MF_00184">
    <property type="entry name" value="Thr_tRNA_synth"/>
    <property type="match status" value="1"/>
</dbReference>
<dbReference type="InterPro" id="IPR002314">
    <property type="entry name" value="aa-tRNA-synt_IIb"/>
</dbReference>
<dbReference type="InterPro" id="IPR006195">
    <property type="entry name" value="aa-tRNA-synth_II"/>
</dbReference>
<dbReference type="InterPro" id="IPR045864">
    <property type="entry name" value="aa-tRNA-synth_II/BPL/LPL"/>
</dbReference>
<dbReference type="InterPro" id="IPR004154">
    <property type="entry name" value="Anticodon-bd"/>
</dbReference>
<dbReference type="InterPro" id="IPR036621">
    <property type="entry name" value="Anticodon-bd_dom_sf"/>
</dbReference>
<dbReference type="InterPro" id="IPR004095">
    <property type="entry name" value="TGS"/>
</dbReference>
<dbReference type="InterPro" id="IPR002320">
    <property type="entry name" value="Thr-tRNA-ligase_IIa"/>
</dbReference>
<dbReference type="InterPro" id="IPR018163">
    <property type="entry name" value="Thr/Ala-tRNA-synth_IIc_edit"/>
</dbReference>
<dbReference type="InterPro" id="IPR047246">
    <property type="entry name" value="ThrRS_anticodon"/>
</dbReference>
<dbReference type="InterPro" id="IPR033728">
    <property type="entry name" value="ThrRS_core"/>
</dbReference>
<dbReference type="InterPro" id="IPR012947">
    <property type="entry name" value="tRNA_SAD"/>
</dbReference>
<dbReference type="NCBIfam" id="TIGR00418">
    <property type="entry name" value="thrS"/>
    <property type="match status" value="1"/>
</dbReference>
<dbReference type="PANTHER" id="PTHR11451:SF44">
    <property type="entry name" value="THREONINE--TRNA LIGASE, CHLOROPLASTIC_MITOCHONDRIAL 2"/>
    <property type="match status" value="1"/>
</dbReference>
<dbReference type="PANTHER" id="PTHR11451">
    <property type="entry name" value="THREONINE-TRNA LIGASE"/>
    <property type="match status" value="1"/>
</dbReference>
<dbReference type="Pfam" id="PF03129">
    <property type="entry name" value="HGTP_anticodon"/>
    <property type="match status" value="1"/>
</dbReference>
<dbReference type="Pfam" id="PF00587">
    <property type="entry name" value="tRNA-synt_2b"/>
    <property type="match status" value="1"/>
</dbReference>
<dbReference type="Pfam" id="PF07973">
    <property type="entry name" value="tRNA_SAD"/>
    <property type="match status" value="1"/>
</dbReference>
<dbReference type="PRINTS" id="PR01047">
    <property type="entry name" value="TRNASYNTHTHR"/>
</dbReference>
<dbReference type="SMART" id="SM00863">
    <property type="entry name" value="tRNA_SAD"/>
    <property type="match status" value="1"/>
</dbReference>
<dbReference type="SUPFAM" id="SSF52954">
    <property type="entry name" value="Class II aaRS ABD-related"/>
    <property type="match status" value="1"/>
</dbReference>
<dbReference type="SUPFAM" id="SSF55681">
    <property type="entry name" value="Class II aaRS and biotin synthetases"/>
    <property type="match status" value="1"/>
</dbReference>
<dbReference type="SUPFAM" id="SSF55186">
    <property type="entry name" value="ThrRS/AlaRS common domain"/>
    <property type="match status" value="1"/>
</dbReference>
<dbReference type="PROSITE" id="PS50862">
    <property type="entry name" value="AA_TRNA_LIGASE_II"/>
    <property type="match status" value="1"/>
</dbReference>
<dbReference type="PROSITE" id="PS51880">
    <property type="entry name" value="TGS"/>
    <property type="match status" value="1"/>
</dbReference>
<keyword id="KW-0030">Aminoacyl-tRNA synthetase</keyword>
<keyword id="KW-0067">ATP-binding</keyword>
<keyword id="KW-0963">Cytoplasm</keyword>
<keyword id="KW-0436">Ligase</keyword>
<keyword id="KW-0479">Metal-binding</keyword>
<keyword id="KW-0547">Nucleotide-binding</keyword>
<keyword id="KW-0648">Protein biosynthesis</keyword>
<keyword id="KW-1185">Reference proteome</keyword>
<keyword id="KW-0694">RNA-binding</keyword>
<keyword id="KW-0820">tRNA-binding</keyword>
<keyword id="KW-0862">Zinc</keyword>
<feature type="chain" id="PRO_1000199528" description="Threonine--tRNA ligase">
    <location>
        <begin position="1"/>
        <end position="692"/>
    </location>
</feature>
<feature type="domain" description="TGS" evidence="2">
    <location>
        <begin position="2"/>
        <end position="59"/>
    </location>
</feature>
<feature type="region of interest" description="Catalytic" evidence="1">
    <location>
        <begin position="255"/>
        <end position="561"/>
    </location>
</feature>
<feature type="binding site" evidence="1">
    <location>
        <position position="360"/>
    </location>
    <ligand>
        <name>Zn(2+)</name>
        <dbReference type="ChEBI" id="CHEBI:29105"/>
    </ligand>
</feature>
<feature type="binding site" evidence="1">
    <location>
        <position position="411"/>
    </location>
    <ligand>
        <name>Zn(2+)</name>
        <dbReference type="ChEBI" id="CHEBI:29105"/>
    </ligand>
</feature>
<feature type="binding site" evidence="1">
    <location>
        <position position="538"/>
    </location>
    <ligand>
        <name>Zn(2+)</name>
        <dbReference type="ChEBI" id="CHEBI:29105"/>
    </ligand>
</feature>
<comment type="function">
    <text evidence="1">Catalyzes the attachment of threonine to tRNA(Thr) in a two-step reaction: L-threonine is first activated by ATP to form Thr-AMP and then transferred to the acceptor end of tRNA(Thr). Also edits incorrectly charged L-seryl-tRNA(Thr).</text>
</comment>
<comment type="catalytic activity">
    <reaction evidence="1">
        <text>tRNA(Thr) + L-threonine + ATP = L-threonyl-tRNA(Thr) + AMP + diphosphate + H(+)</text>
        <dbReference type="Rhea" id="RHEA:24624"/>
        <dbReference type="Rhea" id="RHEA-COMP:9670"/>
        <dbReference type="Rhea" id="RHEA-COMP:9704"/>
        <dbReference type="ChEBI" id="CHEBI:15378"/>
        <dbReference type="ChEBI" id="CHEBI:30616"/>
        <dbReference type="ChEBI" id="CHEBI:33019"/>
        <dbReference type="ChEBI" id="CHEBI:57926"/>
        <dbReference type="ChEBI" id="CHEBI:78442"/>
        <dbReference type="ChEBI" id="CHEBI:78534"/>
        <dbReference type="ChEBI" id="CHEBI:456215"/>
        <dbReference type="EC" id="6.1.1.3"/>
    </reaction>
</comment>
<comment type="cofactor">
    <cofactor evidence="1">
        <name>Zn(2+)</name>
        <dbReference type="ChEBI" id="CHEBI:29105"/>
    </cofactor>
    <text evidence="1">Binds 1 zinc ion per subunit.</text>
</comment>
<comment type="subunit">
    <text evidence="1">Homodimer.</text>
</comment>
<comment type="subcellular location">
    <subcellularLocation>
        <location evidence="1">Cytoplasm</location>
    </subcellularLocation>
</comment>
<comment type="similarity">
    <text evidence="1">Belongs to the class-II aminoacyl-tRNA synthetase family.</text>
</comment>
<protein>
    <recommendedName>
        <fullName evidence="1">Threonine--tRNA ligase</fullName>
        <ecNumber evidence="1">6.1.1.3</ecNumber>
    </recommendedName>
    <alternativeName>
        <fullName evidence="1">Threonyl-tRNA synthetase</fullName>
        <shortName evidence="1">ThrRS</shortName>
    </alternativeName>
</protein>
<sequence>MAEAHISITVNGEAKEVEASQTGVELFADDKNIIAVRLNGELRDLYTPLHDGDNVESVTLDSPDGTGIMRHSATHVMAQAVQEVRPDAKLGIGPVIENGFYYDFDVKDPFTPDDLKTIEKHMQRIIKSAQRFQRRVVSEEEALREEADEPYKIELIKDKEDALETEAAVDISHKELSMYDNLDREGNVVWSDLCRGPHLPNTRYIKAFKLERAAAAYWKGSEANPMLQRIYGVAFPTKDELKAYQTRMEEAAKRDHRKLGQEMDLFSFPDEIGPGLAVFHPKGAAIINAMEDYSREMHRKNHYSFVQTPHITKGGLYETSGHLQWYKDGMYPPMHLDEEKDENGNIVKQGFDYYLKPMNCPMHNLIFKSRQRSYRELPLRLFEFGTVYRYEKSGVVHGLTRVRGLTQDDSHIYCTREQMKDELKNLLNFVLKVLKDYGLNDFYLELSTKDEHKFVGSDEIWEEATNTLAEVAEESGLELVADPGGAAFYGPKISVQARDAIGRTWQVSTIQLDFNLPERFQLEYIAPDGSHQRPVMIHRALFGSIERFFAILLEHYAGAFPAWLAPVQALGVPVADEFAPHLDKFMNSLEEDLVRVETDNSDDRFGKKIRNASKSKVPYIIIAGEEDMNNNAVSFRFRDGSQLNGVPVDQAKAWILETITKRVQVNSVDDFKAATGQPVENVEFGVADTDAE</sequence>
<gene>
    <name evidence="1" type="primary">thrS</name>
    <name type="ordered locus">BLA_1348</name>
</gene>
<evidence type="ECO:0000255" key="1">
    <source>
        <dbReference type="HAMAP-Rule" id="MF_00184"/>
    </source>
</evidence>
<evidence type="ECO:0000255" key="2">
    <source>
        <dbReference type="PROSITE-ProRule" id="PRU01228"/>
    </source>
</evidence>
<accession>B8DUF4</accession>